<dbReference type="EC" id="4.2.3.-" evidence="5"/>
<dbReference type="EC" id="4.2.3.125" evidence="5"/>
<dbReference type="EC" id="4.2.3.126" evidence="5"/>
<dbReference type="EMBL" id="MN146026">
    <property type="protein sequence ID" value="QGA30879.1"/>
    <property type="molecule type" value="Genomic_DNA"/>
</dbReference>
<dbReference type="SMR" id="A0A5Q0QU70"/>
<dbReference type="OrthoDB" id="2861623at2759"/>
<dbReference type="GO" id="GO:0046872">
    <property type="term" value="F:metal ion binding"/>
    <property type="evidence" value="ECO:0007669"/>
    <property type="project" value="UniProtKB-KW"/>
</dbReference>
<dbReference type="GO" id="GO:0010333">
    <property type="term" value="F:terpene synthase activity"/>
    <property type="evidence" value="ECO:0007669"/>
    <property type="project" value="InterPro"/>
</dbReference>
<dbReference type="GO" id="GO:0008299">
    <property type="term" value="P:isoprenoid biosynthetic process"/>
    <property type="evidence" value="ECO:0007669"/>
    <property type="project" value="UniProtKB-ARBA"/>
</dbReference>
<dbReference type="Gene3D" id="1.10.600.10">
    <property type="entry name" value="Farnesyl Diphosphate Synthase"/>
    <property type="match status" value="1"/>
</dbReference>
<dbReference type="InterPro" id="IPR008949">
    <property type="entry name" value="Isoprenoid_synthase_dom_sf"/>
</dbReference>
<dbReference type="InterPro" id="IPR034686">
    <property type="entry name" value="Terpene_cyclase-like_2"/>
</dbReference>
<dbReference type="PANTHER" id="PTHR35201:SF4">
    <property type="entry name" value="BETA-PINACENE SYNTHASE-RELATED"/>
    <property type="match status" value="1"/>
</dbReference>
<dbReference type="PANTHER" id="PTHR35201">
    <property type="entry name" value="TERPENE SYNTHASE"/>
    <property type="match status" value="1"/>
</dbReference>
<dbReference type="Pfam" id="PF19086">
    <property type="entry name" value="Terpene_syn_C_2"/>
    <property type="match status" value="1"/>
</dbReference>
<dbReference type="SFLD" id="SFLDS00005">
    <property type="entry name" value="Isoprenoid_Synthase_Type_I"/>
    <property type="match status" value="1"/>
</dbReference>
<dbReference type="SFLD" id="SFLDG01020">
    <property type="entry name" value="Terpene_Cyclase_Like_2"/>
    <property type="match status" value="1"/>
</dbReference>
<dbReference type="SUPFAM" id="SSF48576">
    <property type="entry name" value="Terpenoid synthases"/>
    <property type="match status" value="1"/>
</dbReference>
<comment type="function">
    <text evidence="5">Terpene cyclase that catalyzes the cyclization of farnesyl diphosphate (FPP) to various sesquiterpenes, including alpha-muurolene, gamma-muurolene, germacrene, delta-cadinene, delta-cadinol and cubenol.</text>
</comment>
<comment type="catalytic activity">
    <reaction evidence="5">
        <text>(2E,6E)-farnesyl diphosphate = alpha-muurolene + diphosphate</text>
        <dbReference type="Rhea" id="RHEA:33103"/>
        <dbReference type="ChEBI" id="CHEBI:33019"/>
        <dbReference type="ChEBI" id="CHEBI:64797"/>
        <dbReference type="ChEBI" id="CHEBI:175763"/>
        <dbReference type="EC" id="4.2.3.125"/>
    </reaction>
    <physiologicalReaction direction="left-to-right" evidence="5">
        <dbReference type="Rhea" id="RHEA:33104"/>
    </physiologicalReaction>
</comment>
<comment type="catalytic activity">
    <reaction evidence="5">
        <text>(2E,6E)-farnesyl diphosphate = gamma-muurolene + diphosphate</text>
        <dbReference type="Rhea" id="RHEA:33107"/>
        <dbReference type="ChEBI" id="CHEBI:33019"/>
        <dbReference type="ChEBI" id="CHEBI:64798"/>
        <dbReference type="ChEBI" id="CHEBI:175763"/>
        <dbReference type="EC" id="4.2.3.126"/>
    </reaction>
    <physiologicalReaction direction="left-to-right" evidence="5">
        <dbReference type="Rhea" id="RHEA:33108"/>
    </physiologicalReaction>
</comment>
<comment type="catalytic activity">
    <reaction evidence="5">
        <text>(2E,6E)-farnesyl diphosphate = delta-cadinene + diphosphate</text>
        <dbReference type="Rhea" id="RHEA:56556"/>
        <dbReference type="ChEBI" id="CHEBI:33019"/>
        <dbReference type="ChEBI" id="CHEBI:140564"/>
        <dbReference type="ChEBI" id="CHEBI:175763"/>
    </reaction>
    <physiologicalReaction direction="left-to-right" evidence="4">
        <dbReference type="Rhea" id="RHEA:56557"/>
    </physiologicalReaction>
</comment>
<comment type="cofactor">
    <cofactor evidence="5">
        <name>Mg(2+)</name>
        <dbReference type="ChEBI" id="CHEBI:18420"/>
    </cofactor>
</comment>
<comment type="domain">
    <text evidence="5">The DDXXD motif is important for the catalytic activity, presumably through binding to Mg(2+).</text>
</comment>
<comment type="similarity">
    <text evidence="7">Belongs to the terpene synthase family.</text>
</comment>
<proteinExistence type="evidence at protein level"/>
<accession>A0A5Q0QU70</accession>
<name>AGR3_CYCAE</name>
<keyword id="KW-0456">Lyase</keyword>
<keyword id="KW-0460">Magnesium</keyword>
<keyword id="KW-0479">Metal-binding</keyword>
<sequence length="358" mass="40819">MNASPFLNESSPTRPTSFVLPDLVSHCKFPLSYHPNGDEIAQESVDWLDSSCPDLTAKQRRALRVLQSGELTAYCYNQATSPERLRVVSDFLTYLFHLDNISDGMMTRETDVLADVVMNAFWFTDKYMPTRGPGKEQLDEELNPGKLARDFWSRAIADCGVGVQARFKETMGLFFEAVNIQARMRDEDTIPDLESYIDVRRDTSGCKPSWVLIEYALGIDLPDHVVDHPIMQALNQGTNDLVTWSNDIFSYNVEQSRGDTHNMIVILMEYHGHTLQSAVDYVGELCAQTIDTFCENKERLPSWGPEIDDMVARYVKGLQDWIVGSLHWSFQTQRYFGKDGLDIKKHRFVKLLPLEAAK</sequence>
<gene>
    <name evidence="6" type="primary">Agr3</name>
</gene>
<reference key="1">
    <citation type="journal article" date="2020" name="ACS Chem. Biol.">
        <title>Agrocybe aegerita serves as a gateway for identifying sesquiterpene biosynthetic enzymes in higher fungi.</title>
        <authorList>
            <person name="Zhang C."/>
            <person name="Chen X."/>
            <person name="Orban A."/>
            <person name="Shukal S."/>
            <person name="Birk F."/>
            <person name="Too H.P."/>
            <person name="Ruehl M."/>
        </authorList>
    </citation>
    <scope>NUCLEOTIDE SEQUENCE [GENOMIC DNA]</scope>
    <scope>FUNCTION</scope>
    <scope>DOMAIN</scope>
    <scope>CATALYTIC ACTIVITY</scope>
    <source>
        <strain>AAE3_05024</strain>
    </source>
</reference>
<reference key="2">
    <citation type="journal article" date="2018" name="BMC Genomics">
        <title>The genome sequence of the commercially cultivated mushroom Agrocybe aegerita reveals a conserved repertoire of fruiting-related genes and a versatile suite of biopolymer-degrading enzymes.</title>
        <authorList>
            <person name="Gupta D.K."/>
            <person name="Ruehl M."/>
            <person name="Mishra B."/>
            <person name="Kleofas V."/>
            <person name="Hofrichter M."/>
            <person name="Herzog R."/>
            <person name="Pecyna M.J."/>
            <person name="Sharma R."/>
            <person name="Kellner H."/>
            <person name="Hennicke F."/>
            <person name="Thines M."/>
        </authorList>
    </citation>
    <scope>NUCLEOTIDE SEQUENCE [LARGE SCALE GENOMIC DNA]</scope>
    <source>
        <strain>AAE3_05024</strain>
    </source>
</reference>
<protein>
    <recommendedName>
        <fullName evidence="6">Sesquiterpene synthase Agr3</fullName>
        <ecNumber evidence="5">4.2.3.-</ecNumber>
        <ecNumber evidence="5">4.2.3.125</ecNumber>
        <ecNumber evidence="5">4.2.3.126</ecNumber>
    </recommendedName>
    <alternativeName>
        <fullName evidence="6">Terpene cyclase Agr3</fullName>
    </alternativeName>
</protein>
<organism>
    <name type="scientific">Cyclocybe aegerita</name>
    <name type="common">Black poplar mushroom</name>
    <name type="synonym">Agrocybe aegerita</name>
    <dbReference type="NCBI Taxonomy" id="1973307"/>
    <lineage>
        <taxon>Eukaryota</taxon>
        <taxon>Fungi</taxon>
        <taxon>Dikarya</taxon>
        <taxon>Basidiomycota</taxon>
        <taxon>Agaricomycotina</taxon>
        <taxon>Agaricomycetes</taxon>
        <taxon>Agaricomycetidae</taxon>
        <taxon>Agaricales</taxon>
        <taxon>Agaricineae</taxon>
        <taxon>Bolbitiaceae</taxon>
        <taxon>Cyclocybe</taxon>
    </lineage>
</organism>
<feature type="chain" id="PRO_0000451258" description="Sesquiterpene synthase Agr3">
    <location>
        <begin position="1"/>
        <end position="358"/>
    </location>
</feature>
<feature type="short sequence motif" description="DDXXD motif" evidence="2">
    <location>
        <begin position="99"/>
        <end position="103"/>
    </location>
</feature>
<feature type="binding site" evidence="3">
    <location>
        <position position="99"/>
    </location>
    <ligand>
        <name>Mg(2+)</name>
        <dbReference type="ChEBI" id="CHEBI:18420"/>
        <label>1</label>
    </ligand>
</feature>
<feature type="binding site" evidence="3">
    <location>
        <position position="99"/>
    </location>
    <ligand>
        <name>Mg(2+)</name>
        <dbReference type="ChEBI" id="CHEBI:18420"/>
        <label>2</label>
    </ligand>
</feature>
<feature type="binding site" evidence="3">
    <location>
        <position position="246"/>
    </location>
    <ligand>
        <name>Mg(2+)</name>
        <dbReference type="ChEBI" id="CHEBI:18420"/>
        <label>3</label>
    </ligand>
</feature>
<feature type="binding site" evidence="3">
    <location>
        <position position="250"/>
    </location>
    <ligand>
        <name>Mg(2+)</name>
        <dbReference type="ChEBI" id="CHEBI:18420"/>
        <label>3</label>
    </ligand>
</feature>
<feature type="binding site" evidence="3">
    <location>
        <position position="254"/>
    </location>
    <ligand>
        <name>Mg(2+)</name>
        <dbReference type="ChEBI" id="CHEBI:18420"/>
        <label>3</label>
    </ligand>
</feature>
<feature type="binding site" evidence="3">
    <location>
        <position position="334"/>
    </location>
    <ligand>
        <name>(2E,6E)-farnesyl diphosphate</name>
        <dbReference type="ChEBI" id="CHEBI:175763"/>
    </ligand>
</feature>
<feature type="binding site" evidence="3">
    <location>
        <position position="335"/>
    </location>
    <ligand>
        <name>(2E,6E)-farnesyl diphosphate</name>
        <dbReference type="ChEBI" id="CHEBI:175763"/>
    </ligand>
</feature>
<feature type="site" description="Plays a critical role in the stabilization of intermediate cation" evidence="1">
    <location>
        <position position="96"/>
    </location>
</feature>
<evidence type="ECO:0000250" key="1">
    <source>
        <dbReference type="UniProtKB" id="B5HDJ6"/>
    </source>
</evidence>
<evidence type="ECO:0000250" key="2">
    <source>
        <dbReference type="UniProtKB" id="P0DL13"/>
    </source>
</evidence>
<evidence type="ECO:0000250" key="3">
    <source>
        <dbReference type="UniProtKB" id="Q9UR08"/>
    </source>
</evidence>
<evidence type="ECO:0000269" key="4">
    <source>
    </source>
</evidence>
<evidence type="ECO:0000269" key="5">
    <source>
    </source>
</evidence>
<evidence type="ECO:0000303" key="6">
    <source>
    </source>
</evidence>
<evidence type="ECO:0000305" key="7"/>